<comment type="function">
    <text evidence="1">The glycine cleavage system catalyzes the degradation of glycine. The P protein binds the alpha-amino group of glycine through its pyridoxal phosphate cofactor; CO(2) is released and the remaining methylamine moiety is then transferred to the lipoamide cofactor of the H protein.</text>
</comment>
<comment type="catalytic activity">
    <reaction evidence="1">
        <text>N(6)-[(R)-lipoyl]-L-lysyl-[glycine-cleavage complex H protein] + glycine + H(+) = N(6)-[(R)-S(8)-aminomethyldihydrolipoyl]-L-lysyl-[glycine-cleavage complex H protein] + CO2</text>
        <dbReference type="Rhea" id="RHEA:24304"/>
        <dbReference type="Rhea" id="RHEA-COMP:10494"/>
        <dbReference type="Rhea" id="RHEA-COMP:10495"/>
        <dbReference type="ChEBI" id="CHEBI:15378"/>
        <dbReference type="ChEBI" id="CHEBI:16526"/>
        <dbReference type="ChEBI" id="CHEBI:57305"/>
        <dbReference type="ChEBI" id="CHEBI:83099"/>
        <dbReference type="ChEBI" id="CHEBI:83143"/>
        <dbReference type="EC" id="1.4.4.2"/>
    </reaction>
</comment>
<comment type="cofactor">
    <cofactor evidence="1">
        <name>pyridoxal 5'-phosphate</name>
        <dbReference type="ChEBI" id="CHEBI:597326"/>
    </cofactor>
</comment>
<comment type="subunit">
    <text evidence="1">The glycine cleavage system is composed of four proteins: P, T, L and H. In this organism, the P 'protein' is a heterodimer of two subunits.</text>
</comment>
<comment type="similarity">
    <text evidence="1">Belongs to the GcvP family. C-terminal subunit subfamily.</text>
</comment>
<proteinExistence type="inferred from homology"/>
<dbReference type="EC" id="1.4.4.2" evidence="1"/>
<dbReference type="EMBL" id="BX571857">
    <property type="protein sequence ID" value="CAG43268.1"/>
    <property type="molecule type" value="Genomic_DNA"/>
</dbReference>
<dbReference type="RefSeq" id="WP_000202189.1">
    <property type="nucleotide sequence ID" value="NC_002953.3"/>
</dbReference>
<dbReference type="SMR" id="Q6G931"/>
<dbReference type="KEGG" id="sas:SAS1473"/>
<dbReference type="HOGENOM" id="CLU_004620_5_0_9"/>
<dbReference type="GO" id="GO:0005829">
    <property type="term" value="C:cytosol"/>
    <property type="evidence" value="ECO:0007669"/>
    <property type="project" value="TreeGrafter"/>
</dbReference>
<dbReference type="GO" id="GO:0005960">
    <property type="term" value="C:glycine cleavage complex"/>
    <property type="evidence" value="ECO:0007669"/>
    <property type="project" value="TreeGrafter"/>
</dbReference>
<dbReference type="GO" id="GO:0016594">
    <property type="term" value="F:glycine binding"/>
    <property type="evidence" value="ECO:0007669"/>
    <property type="project" value="TreeGrafter"/>
</dbReference>
<dbReference type="GO" id="GO:0004375">
    <property type="term" value="F:glycine dehydrogenase (decarboxylating) activity"/>
    <property type="evidence" value="ECO:0007669"/>
    <property type="project" value="UniProtKB-EC"/>
</dbReference>
<dbReference type="GO" id="GO:0030170">
    <property type="term" value="F:pyridoxal phosphate binding"/>
    <property type="evidence" value="ECO:0007669"/>
    <property type="project" value="TreeGrafter"/>
</dbReference>
<dbReference type="GO" id="GO:0019464">
    <property type="term" value="P:glycine decarboxylation via glycine cleavage system"/>
    <property type="evidence" value="ECO:0007669"/>
    <property type="project" value="UniProtKB-UniRule"/>
</dbReference>
<dbReference type="CDD" id="cd00613">
    <property type="entry name" value="GDC-P"/>
    <property type="match status" value="1"/>
</dbReference>
<dbReference type="FunFam" id="3.40.640.10:FF:000034">
    <property type="entry name" value="Probable glycine dehydrogenase (decarboxylating) subunit 2"/>
    <property type="match status" value="1"/>
</dbReference>
<dbReference type="FunFam" id="3.90.1150.10:FF:000014">
    <property type="entry name" value="Probable glycine dehydrogenase (decarboxylating) subunit 2"/>
    <property type="match status" value="1"/>
</dbReference>
<dbReference type="Gene3D" id="6.20.440.10">
    <property type="match status" value="1"/>
</dbReference>
<dbReference type="Gene3D" id="3.90.1150.10">
    <property type="entry name" value="Aspartate Aminotransferase, domain 1"/>
    <property type="match status" value="1"/>
</dbReference>
<dbReference type="Gene3D" id="3.40.640.10">
    <property type="entry name" value="Type I PLP-dependent aspartate aminotransferase-like (Major domain)"/>
    <property type="match status" value="1"/>
</dbReference>
<dbReference type="HAMAP" id="MF_00713">
    <property type="entry name" value="GcvPB"/>
    <property type="match status" value="1"/>
</dbReference>
<dbReference type="InterPro" id="IPR000192">
    <property type="entry name" value="Aminotrans_V_dom"/>
</dbReference>
<dbReference type="InterPro" id="IPR023012">
    <property type="entry name" value="GcvPB"/>
</dbReference>
<dbReference type="InterPro" id="IPR049316">
    <property type="entry name" value="GDC-P_C"/>
</dbReference>
<dbReference type="InterPro" id="IPR020581">
    <property type="entry name" value="GDC_P"/>
</dbReference>
<dbReference type="InterPro" id="IPR015424">
    <property type="entry name" value="PyrdxlP-dep_Trfase"/>
</dbReference>
<dbReference type="InterPro" id="IPR015421">
    <property type="entry name" value="PyrdxlP-dep_Trfase_major"/>
</dbReference>
<dbReference type="InterPro" id="IPR015422">
    <property type="entry name" value="PyrdxlP-dep_Trfase_small"/>
</dbReference>
<dbReference type="NCBIfam" id="NF003346">
    <property type="entry name" value="PRK04366.1"/>
    <property type="match status" value="1"/>
</dbReference>
<dbReference type="PANTHER" id="PTHR11773:SF1">
    <property type="entry name" value="GLYCINE DEHYDROGENASE (DECARBOXYLATING), MITOCHONDRIAL"/>
    <property type="match status" value="1"/>
</dbReference>
<dbReference type="PANTHER" id="PTHR11773">
    <property type="entry name" value="GLYCINE DEHYDROGENASE, DECARBOXYLATING"/>
    <property type="match status" value="1"/>
</dbReference>
<dbReference type="Pfam" id="PF00266">
    <property type="entry name" value="Aminotran_5"/>
    <property type="match status" value="1"/>
</dbReference>
<dbReference type="Pfam" id="PF21478">
    <property type="entry name" value="GcvP2_C"/>
    <property type="match status" value="1"/>
</dbReference>
<dbReference type="SUPFAM" id="SSF53383">
    <property type="entry name" value="PLP-dependent transferases"/>
    <property type="match status" value="1"/>
</dbReference>
<reference key="1">
    <citation type="journal article" date="2004" name="Proc. Natl. Acad. Sci. U.S.A.">
        <title>Complete genomes of two clinical Staphylococcus aureus strains: evidence for the rapid evolution of virulence and drug resistance.</title>
        <authorList>
            <person name="Holden M.T.G."/>
            <person name="Feil E.J."/>
            <person name="Lindsay J.A."/>
            <person name="Peacock S.J."/>
            <person name="Day N.P.J."/>
            <person name="Enright M.C."/>
            <person name="Foster T.J."/>
            <person name="Moore C.E."/>
            <person name="Hurst L."/>
            <person name="Atkin R."/>
            <person name="Barron A."/>
            <person name="Bason N."/>
            <person name="Bentley S.D."/>
            <person name="Chillingworth C."/>
            <person name="Chillingworth T."/>
            <person name="Churcher C."/>
            <person name="Clark L."/>
            <person name="Corton C."/>
            <person name="Cronin A."/>
            <person name="Doggett J."/>
            <person name="Dowd L."/>
            <person name="Feltwell T."/>
            <person name="Hance Z."/>
            <person name="Harris B."/>
            <person name="Hauser H."/>
            <person name="Holroyd S."/>
            <person name="Jagels K."/>
            <person name="James K.D."/>
            <person name="Lennard N."/>
            <person name="Line A."/>
            <person name="Mayes R."/>
            <person name="Moule S."/>
            <person name="Mungall K."/>
            <person name="Ormond D."/>
            <person name="Quail M.A."/>
            <person name="Rabbinowitsch E."/>
            <person name="Rutherford K.M."/>
            <person name="Sanders M."/>
            <person name="Sharp S."/>
            <person name="Simmonds M."/>
            <person name="Stevens K."/>
            <person name="Whitehead S."/>
            <person name="Barrell B.G."/>
            <person name="Spratt B.G."/>
            <person name="Parkhill J."/>
        </authorList>
    </citation>
    <scope>NUCLEOTIDE SEQUENCE [LARGE SCALE GENOMIC DNA]</scope>
    <source>
        <strain>MSSA476</strain>
    </source>
</reference>
<gene>
    <name evidence="1" type="primary">gcvPB</name>
    <name type="ordered locus">SAS1473</name>
</gene>
<sequence>MTSKSSPLIFERSREGRYAYSLPKSDIKTNSVESLLDDKFIRKNKAEFPEVAELDLVRHYTELSNKNFGVDNGFYPLGSCTMKYNPKINEKVARIPGFSESHPLQDEDQVQGSLEIIYSLQEELKEITGMDEVTLQPAAGAHGEWTALMIFKAYHENNGEGHRDEVIVPDSAHGTNPASASFAGFKSVTVKSNERGEVDIDDLKRVVNENTAAIMLTNPNTLGIFEKNIMEIREIVHNAGGLLYYDGANLNAIMDKVRPGDMGFDAVHLNLHKTFTGPHGGGGPGSGPVGVVKELASYLPKPMVIKDGDKFKYDNDIKNSIGRVKPFYGNFGIYLRAYTYIRTMGATGLKEVSEAAVLNANYIKARLSKHFEIPYKQYCKHEFVLSGVRQKEFGVRTLDMAKRLLDFGVHPPTIYFPLNVEEGMMIEPTETESKETLDYFIDTLISIAEEAKNDPDKVLEAPHTTVIDRLDEATAARKPILKFENLKQEK</sequence>
<organism>
    <name type="scientific">Staphylococcus aureus (strain MSSA476)</name>
    <dbReference type="NCBI Taxonomy" id="282459"/>
    <lineage>
        <taxon>Bacteria</taxon>
        <taxon>Bacillati</taxon>
        <taxon>Bacillota</taxon>
        <taxon>Bacilli</taxon>
        <taxon>Bacillales</taxon>
        <taxon>Staphylococcaceae</taxon>
        <taxon>Staphylococcus</taxon>
    </lineage>
</organism>
<evidence type="ECO:0000255" key="1">
    <source>
        <dbReference type="HAMAP-Rule" id="MF_00713"/>
    </source>
</evidence>
<protein>
    <recommendedName>
        <fullName evidence="1">Probable glycine dehydrogenase (decarboxylating) subunit 2</fullName>
        <ecNumber evidence="1">1.4.4.2</ecNumber>
    </recommendedName>
    <alternativeName>
        <fullName evidence="1">Glycine cleavage system P-protein subunit 2</fullName>
    </alternativeName>
    <alternativeName>
        <fullName evidence="1">Glycine decarboxylase subunit 2</fullName>
    </alternativeName>
    <alternativeName>
        <fullName evidence="1">Glycine dehydrogenase (aminomethyl-transferring) subunit 2</fullName>
    </alternativeName>
</protein>
<name>GCSPB_STAAS</name>
<accession>Q6G931</accession>
<feature type="chain" id="PRO_0000167015" description="Probable glycine dehydrogenase (decarboxylating) subunit 2">
    <location>
        <begin position="1"/>
        <end position="490"/>
    </location>
</feature>
<feature type="modified residue" description="N6-(pyridoxal phosphate)lysine" evidence="1">
    <location>
        <position position="273"/>
    </location>
</feature>
<keyword id="KW-0560">Oxidoreductase</keyword>
<keyword id="KW-0663">Pyridoxal phosphate</keyword>